<organismHost>
    <name type="scientific">Antirrhinum majus</name>
    <name type="common">Garden snapdragon</name>
    <dbReference type="NCBI Taxonomy" id="4151"/>
</organismHost>
<organismHost>
    <name type="scientific">Capsicum</name>
    <name type="common">peppers</name>
    <dbReference type="NCBI Taxonomy" id="4071"/>
</organismHost>
<organismHost>
    <name type="scientific">Delphinium</name>
    <dbReference type="NCBI Taxonomy" id="46246"/>
</organismHost>
<organismHost>
    <name type="scientific">Petunia</name>
    <dbReference type="NCBI Taxonomy" id="4101"/>
</organismHost>
<organismHost>
    <name type="scientific">Solanum lycopersicum</name>
    <name type="common">Tomato</name>
    <name type="synonym">Lycopersicon esculentum</name>
    <dbReference type="NCBI Taxonomy" id="4081"/>
</organismHost>
<organismHost>
    <name type="scientific">Tagetes</name>
    <name type="common">marigolds</name>
    <dbReference type="NCBI Taxonomy" id="13707"/>
</organismHost>
<dbReference type="EC" id="2.1.1.-"/>
<dbReference type="EC" id="2.7.7.-"/>
<dbReference type="EC" id="2.7.7.48"/>
<dbReference type="EC" id="3.6.4.13"/>
<dbReference type="EMBL" id="AJ243571">
    <property type="protein sequence ID" value="CAB62911.1"/>
    <property type="molecule type" value="Genomic_RNA"/>
</dbReference>
<dbReference type="EMBL" id="AJ243571">
    <property type="protein sequence ID" value="CAB62912.1"/>
    <property type="molecule type" value="Genomic_RNA"/>
</dbReference>
<dbReference type="Proteomes" id="UP000008252">
    <property type="component" value="Genome"/>
</dbReference>
<dbReference type="GO" id="GO:0005524">
    <property type="term" value="F:ATP binding"/>
    <property type="evidence" value="ECO:0007669"/>
    <property type="project" value="UniProtKB-KW"/>
</dbReference>
<dbReference type="GO" id="GO:0016887">
    <property type="term" value="F:ATP hydrolysis activity"/>
    <property type="evidence" value="ECO:0007669"/>
    <property type="project" value="RHEA"/>
</dbReference>
<dbReference type="GO" id="GO:0008174">
    <property type="term" value="F:mRNA methyltransferase activity"/>
    <property type="evidence" value="ECO:0007669"/>
    <property type="project" value="InterPro"/>
</dbReference>
<dbReference type="GO" id="GO:0003723">
    <property type="term" value="F:RNA binding"/>
    <property type="evidence" value="ECO:0007669"/>
    <property type="project" value="InterPro"/>
</dbReference>
<dbReference type="GO" id="GO:0003724">
    <property type="term" value="F:RNA helicase activity"/>
    <property type="evidence" value="ECO:0007669"/>
    <property type="project" value="UniProtKB-EC"/>
</dbReference>
<dbReference type="GO" id="GO:0003968">
    <property type="term" value="F:RNA-directed RNA polymerase activity"/>
    <property type="evidence" value="ECO:0007669"/>
    <property type="project" value="UniProtKB-KW"/>
</dbReference>
<dbReference type="GO" id="GO:0006351">
    <property type="term" value="P:DNA-templated transcription"/>
    <property type="evidence" value="ECO:0007669"/>
    <property type="project" value="InterPro"/>
</dbReference>
<dbReference type="GO" id="GO:0016556">
    <property type="term" value="P:mRNA modification"/>
    <property type="evidence" value="ECO:0007669"/>
    <property type="project" value="InterPro"/>
</dbReference>
<dbReference type="GO" id="GO:0006396">
    <property type="term" value="P:RNA processing"/>
    <property type="evidence" value="ECO:0007669"/>
    <property type="project" value="InterPro"/>
</dbReference>
<dbReference type="GO" id="GO:0052170">
    <property type="term" value="P:symbiont-mediated suppression of host innate immune response"/>
    <property type="evidence" value="ECO:0007669"/>
    <property type="project" value="UniProtKB-KW"/>
</dbReference>
<dbReference type="GO" id="GO:0039694">
    <property type="term" value="P:viral RNA genome replication"/>
    <property type="evidence" value="ECO:0007669"/>
    <property type="project" value="InterPro"/>
</dbReference>
<dbReference type="CDD" id="cd23251">
    <property type="entry name" value="Virgaviridae_RdRp"/>
    <property type="match status" value="1"/>
</dbReference>
<dbReference type="Gene3D" id="3.30.450.420">
    <property type="match status" value="1"/>
</dbReference>
<dbReference type="Gene3D" id="3.40.50.300">
    <property type="entry name" value="P-loop containing nucleotide triphosphate hydrolases"/>
    <property type="match status" value="2"/>
</dbReference>
<dbReference type="InterPro" id="IPR027351">
    <property type="entry name" value="(+)RNA_virus_helicase_core_dom"/>
</dbReference>
<dbReference type="InterPro" id="IPR002588">
    <property type="entry name" value="Alphavirus-like_MT_dom"/>
</dbReference>
<dbReference type="InterPro" id="IPR043502">
    <property type="entry name" value="DNA/RNA_pol_sf"/>
</dbReference>
<dbReference type="InterPro" id="IPR027417">
    <property type="entry name" value="P-loop_NTPase"/>
</dbReference>
<dbReference type="InterPro" id="IPR001788">
    <property type="entry name" value="RNA-dep_RNA_pol_alsuvir"/>
</dbReference>
<dbReference type="InterPro" id="IPR007094">
    <property type="entry name" value="RNA-dir_pol_PSvirus"/>
</dbReference>
<dbReference type="InterPro" id="IPR047310">
    <property type="entry name" value="Virgaviridae_RdRp"/>
</dbReference>
<dbReference type="Pfam" id="PF00978">
    <property type="entry name" value="RdRP_2"/>
    <property type="match status" value="1"/>
</dbReference>
<dbReference type="Pfam" id="PF01443">
    <property type="entry name" value="Viral_helicase1"/>
    <property type="match status" value="1"/>
</dbReference>
<dbReference type="Pfam" id="PF01660">
    <property type="entry name" value="Vmethyltransf"/>
    <property type="match status" value="1"/>
</dbReference>
<dbReference type="SUPFAM" id="SSF56672">
    <property type="entry name" value="DNA/RNA polymerases"/>
    <property type="match status" value="1"/>
</dbReference>
<dbReference type="SUPFAM" id="SSF52540">
    <property type="entry name" value="P-loop containing nucleoside triphosphate hydrolases"/>
    <property type="match status" value="1"/>
</dbReference>
<dbReference type="PROSITE" id="PS51743">
    <property type="entry name" value="ALPHAVIRUS_MT"/>
    <property type="match status" value="1"/>
</dbReference>
<dbReference type="PROSITE" id="PS51657">
    <property type="entry name" value="PSRV_HELICASE"/>
    <property type="match status" value="1"/>
</dbReference>
<dbReference type="PROSITE" id="PS50507">
    <property type="entry name" value="RDRP_SSRNA_POS"/>
    <property type="match status" value="1"/>
</dbReference>
<comment type="function">
    <molecule>Replicase large subunit</molecule>
    <text>Is an RNA-dependent RNA polymerase active in viral RNA replication.</text>
</comment>
<comment type="function">
    <molecule>Replicase small subunit</molecule>
    <text evidence="1 5">Is a methyltransferase active in RNA capping and an RNA helicase. Methyltransferase displays a cytoplasmic capping enzyme activity. This function is necessary since all viral RNAs are synthesized in the cytoplasm, and host capping enzymes are restricted to the nucleus. Helicase region probably exhibits NTPase and RNA unwinding activities (Potential). It also acts as a suppressor of RNA-mediated gene silencing, also known as post-transcriptional gene silencing (PTGS), a mechanism of plant viral defense that limits the accumulation of viral RNAs. May mediate silencing suppression through either inhibition of HEN1-mediated siRNA or siRNA demethylation (By similarity).</text>
</comment>
<comment type="catalytic activity">
    <reaction evidence="3">
        <text>RNA(n) + a ribonucleoside 5'-triphosphate = RNA(n+1) + diphosphate</text>
        <dbReference type="Rhea" id="RHEA:21248"/>
        <dbReference type="Rhea" id="RHEA-COMP:14527"/>
        <dbReference type="Rhea" id="RHEA-COMP:17342"/>
        <dbReference type="ChEBI" id="CHEBI:33019"/>
        <dbReference type="ChEBI" id="CHEBI:61557"/>
        <dbReference type="ChEBI" id="CHEBI:140395"/>
        <dbReference type="EC" id="2.7.7.48"/>
    </reaction>
</comment>
<comment type="catalytic activity">
    <reaction>
        <text>ATP + H2O = ADP + phosphate + H(+)</text>
        <dbReference type="Rhea" id="RHEA:13065"/>
        <dbReference type="ChEBI" id="CHEBI:15377"/>
        <dbReference type="ChEBI" id="CHEBI:15378"/>
        <dbReference type="ChEBI" id="CHEBI:30616"/>
        <dbReference type="ChEBI" id="CHEBI:43474"/>
        <dbReference type="ChEBI" id="CHEBI:456216"/>
        <dbReference type="EC" id="3.6.4.13"/>
    </reaction>
</comment>
<comment type="subunit">
    <text evidence="1">Heterodimer of a large and a small subunit.</text>
</comment>
<comment type="miscellaneous">
    <text>This protein is translated as a fusion protein by episodic readthrough of a termination codon. When readthrough of the terminator codon TGA occurs between the codons for Gln-1116 and Gln-1118, this results in the addition of the RdRp region to the replicase.</text>
</comment>
<comment type="similarity">
    <text evidence="5">Belongs to the ssRNA positive-strand viruses RNA-directed RNA polymerase family.</text>
</comment>
<organism>
    <name type="scientific">Tomato mosaic virus (strain Kazakh K1)</name>
    <name type="common">ToMV</name>
    <name type="synonym">TMV strain K1</name>
    <dbReference type="NCBI Taxonomy" id="138311"/>
    <lineage>
        <taxon>Viruses</taxon>
        <taxon>Riboviria</taxon>
        <taxon>Orthornavirae</taxon>
        <taxon>Kitrinoviricota</taxon>
        <taxon>Alsuviricetes</taxon>
        <taxon>Martellivirales</taxon>
        <taxon>Virgaviridae</taxon>
        <taxon>Tobamovirus</taxon>
        <taxon>Tomato mosaic virus</taxon>
    </lineage>
</organism>
<sequence>MAYTQTATSSALLETVRGNNTLVNDLAKRRLYDTAVDEFNARDRRPKVNFSKVVSEEQTLIATKAYPEFQITFYNTQNAVHSLAGGLRSLELEYLMMQIPYGSLTYDIGGNFASHLFKGRAYVHCCMPNLDVRDIMRHEGQKDSIELYLSRLERGNKHVPNFQKEAFDRYAEMPNEVVCHDTFQTCRHSQECYTGRVYAIALHSIYDIPADEFGAALLRKNVHVCYAAFHFSENLLLEDSHVNLDEINACFQRDGDRLTFSFASESTLNYSHSYSNILKYVCKTYFPASNREVYMKEFLVTRVNTWFCKFSRIDTFLLYKGVAHKGVDNEQFYKAMEDAWHYKKTLAMCNSERILLEDSSSVNYWFPKMRDMVIVPLFDISLETSKRTRKEVLVSKDFVYTVLNHIRTYQAKALTYSNVLSFVESIRSRVIINGVTARSEWDVDKSLLQSLSMTFFLHTKLAVLKDDLLISKFALGPKTVSQHVWDEISLAFGNAFPSIKERLINRKLIKITENALEIRVPDLYVTFHDRLVSEYKMSVDMPVLDIRKKMEETEEMYNALSELSVLKTSDKFDVDVFSQMCQSLEVDPMTAAKVIVAVMSNESGLTLTFEQPTEANVALALQDSEKASDGALVVTSRDVEEPSIRGSMARGELQLAGLSGDVPESSYTRSEEIESLEQFHMATASSLIHKQMCSIVYTGPLKVQQMKNFIDSLVASLSAAVSNLVKILKDTAAIDLETRQKFGVLDVASKRWLVKPSAKNHAWGVVETHARKYHVALLEHDEFGIITCDNWRRVAVSSESVVYSDMAKLRTLRRLLKDGEPHVSSAKVVLVDGVPGCGKTKEILSRVNFEEDLILVPGRQAAEMIRRRANASGIIVATKDNVRTVDSFLMNYGKGARCQFKRLFIDEGLMLHTGCVNFLVEMSLCDIAYVYGDTQQIPYINRVTGFPYPAHFAKLEVDEVETRRTTLRCPADVTHFLNQRYEGHVMCTSSEKKSVSQEMVSGAASINPVSKPLKGKILTFTQSDKEALLSRGYADVHTVHEVQGETYADVSLVRLTPTPVSIIARDSPHVLVSLSRHTKSLKYYTVVMDPLVSIIRDLERVSSYLLDMYKVDAGTQXQLQVDSVFKNFNLFVAAPKTGDISDMQFYYDKCLPGNSTLLNNYDAVTMKLTDISLNVKDCILDMSKSVAAPKDVKPTLIPMVRTAAEMPRQTGLLENLVAMIKRNFNSPELSGVVDIENTASLVVDKFFDSYLLKEKRKPNKNFSLFSRESLNRWIAKQEQVTIGQLADFDFVDLPAVDQYRHMIKAQPKQKLDLSIQTEYPALQTIVYHSKKINAIFGPLFSELTRQLLDSIDSSRFLFFTRKTPAQIEDFFGDLDSHVPMDVLELDVSKYDKSQNEFHCAVEYEIWRRLGLEDFLAEVWKQGHRKTTLKDYTAGIKTCLWYQRKSGDVTTFIGNTVIIASCLASMLPMEKLIKGAFCGDDSLLYFPKGCEYPDIQQAANLMWNFEAKLFKKQYGYFCGRYVIHHDRGCIVYYDPLKLISKLGAKHIKDWDHLEEFRRSLCDVAESLNNCAYYTQLDDAVGEVHKTAPPGSFVYKSLVKYLSDKVLFRSLFLDGSSC</sequence>
<accession>Q9Q1T8</accession>
<accession>Q9Q1T7</accession>
<name>RDRP_TOMK1</name>
<protein>
    <recommendedName>
        <fullName>Replicase large subunit</fullName>
        <ecNumber>2.1.1.-</ecNumber>
        <ecNumber>2.7.7.-</ecNumber>
        <ecNumber>2.7.7.48</ecNumber>
        <ecNumber>3.6.4.13</ecNumber>
    </recommendedName>
    <alternativeName>
        <fullName>183 kDa protein</fullName>
    </alternativeName>
    <alternativeName>
        <fullName>RNA-directed RNA polymerase</fullName>
    </alternativeName>
    <component>
        <recommendedName>
            <fullName>Replicase small subunit</fullName>
            <ecNumber>2.1.1.-</ecNumber>
            <ecNumber>2.7.7.-</ecNumber>
            <ecNumber>3.6.4.13</ecNumber>
        </recommendedName>
        <alternativeName>
            <fullName>126 kDa protein</fullName>
        </alternativeName>
        <alternativeName>
            <fullName>Methyltransferase/RNA helicase</fullName>
            <shortName>MT/HEL</shortName>
        </alternativeName>
    </component>
</protein>
<proteinExistence type="inferred from homology"/>
<reference key="1">
    <citation type="journal article" date="2000" name="Mol. Biol. (Mosk.)">
        <title>Biological properties and genome structure of the Kazakh isolate K1 of Tobacco Mosaic virus.</title>
        <authorList>
            <person name="Belenovich E.V."/>
            <person name="Novikov V.K."/>
            <person name="Zavriev S.K."/>
        </authorList>
    </citation>
    <scope>NUCLEOTIDE SEQUENCE [GENOMIC RNA]</scope>
</reference>
<keyword id="KW-0067">ATP-binding</keyword>
<keyword id="KW-0347">Helicase</keyword>
<keyword id="KW-0945">Host-virus interaction</keyword>
<keyword id="KW-0378">Hydrolase</keyword>
<keyword id="KW-1090">Inhibition of host innate immune response by virus</keyword>
<keyword id="KW-0547">Nucleotide-binding</keyword>
<keyword id="KW-0548">Nucleotidyltransferase</keyword>
<keyword id="KW-1159">RNA suppression of termination</keyword>
<keyword id="KW-0696">RNA-directed RNA polymerase</keyword>
<keyword id="KW-0941">Suppressor of RNA silencing</keyword>
<keyword id="KW-0808">Transferase</keyword>
<keyword id="KW-0899">Viral immunoevasion</keyword>
<keyword id="KW-0693">Viral RNA replication</keyword>
<evidence type="ECO:0000250" key="1"/>
<evidence type="ECO:0000255" key="2"/>
<evidence type="ECO:0000255" key="3">
    <source>
        <dbReference type="PROSITE-ProRule" id="PRU00539"/>
    </source>
</evidence>
<evidence type="ECO:0000255" key="4">
    <source>
        <dbReference type="PROSITE-ProRule" id="PRU01079"/>
    </source>
</evidence>
<evidence type="ECO:0000305" key="5"/>
<feature type="chain" id="PRO_0000041190" description="Replicase large subunit">
    <location>
        <begin position="1"/>
        <end position="1616"/>
    </location>
</feature>
<feature type="chain" id="PRO_0000041191" description="Replicase small subunit">
    <location>
        <begin position="1"/>
        <end position="1116"/>
    </location>
</feature>
<feature type="domain" description="Alphavirus-like MT" evidence="4">
    <location>
        <begin position="72"/>
        <end position="281"/>
    </location>
</feature>
<feature type="domain" description="(+)RNA virus helicase ATP-binding">
    <location>
        <begin position="801"/>
        <end position="963"/>
    </location>
</feature>
<feature type="domain" description="(+)RNA virus helicase C-terminal">
    <location>
        <begin position="964"/>
        <end position="1116"/>
    </location>
</feature>
<feature type="domain" description="RdRp catalytic" evidence="3">
    <location>
        <begin position="1380"/>
        <end position="1493"/>
    </location>
</feature>
<feature type="region of interest" description="Methyltransferase">
    <location>
        <begin position="50"/>
        <end position="458"/>
    </location>
</feature>
<feature type="region of interest" description="Helicase">
    <location>
        <begin position="830"/>
        <end position="1085"/>
    </location>
</feature>
<feature type="binding site" evidence="2">
    <location>
        <begin position="833"/>
        <end position="840"/>
    </location>
    <ligand>
        <name>ATP</name>
        <dbReference type="ChEBI" id="CHEBI:30616"/>
    </ligand>
</feature>